<protein>
    <recommendedName>
        <fullName evidence="1">Large ribosomal subunit protein uL29c</fullName>
    </recommendedName>
    <alternativeName>
        <fullName evidence="2">50S ribosomal protein L29, chloroplastic</fullName>
    </alternativeName>
</protein>
<sequence length="68" mass="7982">MTFPKISDVTNLDSSSLAEEILVIKRELFDLRLKRATRQDFQPHLFKHSKHRLAQLLTVEKSRTKSTM</sequence>
<geneLocation type="chloroplast"/>
<gene>
    <name evidence="1" type="primary">rpl29</name>
</gene>
<keyword id="KW-0150">Chloroplast</keyword>
<keyword id="KW-0934">Plastid</keyword>
<keyword id="KW-0687">Ribonucleoprotein</keyword>
<keyword id="KW-0689">Ribosomal protein</keyword>
<organism>
    <name type="scientific">Pyropia yezoensis</name>
    <name type="common">Susabi-nori</name>
    <name type="synonym">Porphyra yezoensis</name>
    <dbReference type="NCBI Taxonomy" id="2788"/>
    <lineage>
        <taxon>Eukaryota</taxon>
        <taxon>Rhodophyta</taxon>
        <taxon>Bangiophyceae</taxon>
        <taxon>Bangiales</taxon>
        <taxon>Bangiaceae</taxon>
        <taxon>Pyropia</taxon>
    </lineage>
</organism>
<reference key="1">
    <citation type="submission" date="2006-09" db="EMBL/GenBank/DDBJ databases">
        <title>Cloning and analysis of the Porphyra yezoensis gene for rpl29.</title>
        <authorList>
            <person name="Wang M.Q."/>
            <person name="Mao Y.X."/>
        </authorList>
    </citation>
    <scope>NUCLEOTIDE SEQUENCE [GENOMIC DNA]</scope>
    <source>
        <strain>Qingdao</strain>
    </source>
</reference>
<reference key="2">
    <citation type="submission" date="2003-11" db="EMBL/GenBank/DDBJ databases">
        <title>Whole genome sequence of Porphyra yezoensis chloroplast.</title>
        <authorList>
            <person name="Kunimoto M."/>
            <person name="Morishima K."/>
            <person name="Yoshikawa M."/>
            <person name="Fukuda S."/>
            <person name="Kobayashi T."/>
            <person name="Kobayashi M."/>
            <person name="Okazaki T."/>
            <person name="Ohara I."/>
            <person name="Nakayama I."/>
        </authorList>
    </citation>
    <scope>NUCLEOTIDE SEQUENCE [LARGE SCALE GENOMIC DNA]</scope>
    <source>
        <strain>U-51</strain>
    </source>
</reference>
<accession>Q1XDI2</accession>
<proteinExistence type="inferred from homology"/>
<comment type="subcellular location">
    <subcellularLocation>
        <location>Plastid</location>
        <location>Chloroplast</location>
    </subcellularLocation>
</comment>
<comment type="similarity">
    <text evidence="1">Belongs to the universal ribosomal protein uL29 family.</text>
</comment>
<name>RK29_PYRYE</name>
<feature type="chain" id="PRO_0000276459" description="Large ribosomal subunit protein uL29c">
    <location>
        <begin position="1"/>
        <end position="68"/>
    </location>
</feature>
<evidence type="ECO:0000255" key="1">
    <source>
        <dbReference type="HAMAP-Rule" id="MF_00374"/>
    </source>
</evidence>
<evidence type="ECO:0000305" key="2"/>
<dbReference type="EMBL" id="DQ995207">
    <property type="protein sequence ID" value="ABJ91322.1"/>
    <property type="molecule type" value="Genomic_DNA"/>
</dbReference>
<dbReference type="EMBL" id="AP006715">
    <property type="protein sequence ID" value="BAE92429.1"/>
    <property type="molecule type" value="Genomic_DNA"/>
</dbReference>
<dbReference type="RefSeq" id="YP_536986.1">
    <property type="nucleotide sequence ID" value="NC_007932.1"/>
</dbReference>
<dbReference type="SMR" id="Q1XDI2"/>
<dbReference type="GeneID" id="3978917"/>
<dbReference type="GO" id="GO:0009507">
    <property type="term" value="C:chloroplast"/>
    <property type="evidence" value="ECO:0007669"/>
    <property type="project" value="UniProtKB-SubCell"/>
</dbReference>
<dbReference type="GO" id="GO:0022625">
    <property type="term" value="C:cytosolic large ribosomal subunit"/>
    <property type="evidence" value="ECO:0007669"/>
    <property type="project" value="TreeGrafter"/>
</dbReference>
<dbReference type="GO" id="GO:0003735">
    <property type="term" value="F:structural constituent of ribosome"/>
    <property type="evidence" value="ECO:0007669"/>
    <property type="project" value="InterPro"/>
</dbReference>
<dbReference type="GO" id="GO:0006412">
    <property type="term" value="P:translation"/>
    <property type="evidence" value="ECO:0007669"/>
    <property type="project" value="UniProtKB-UniRule"/>
</dbReference>
<dbReference type="CDD" id="cd00427">
    <property type="entry name" value="Ribosomal_L29_HIP"/>
    <property type="match status" value="1"/>
</dbReference>
<dbReference type="Gene3D" id="1.10.287.310">
    <property type="match status" value="1"/>
</dbReference>
<dbReference type="HAMAP" id="MF_00374">
    <property type="entry name" value="Ribosomal_uL29"/>
    <property type="match status" value="1"/>
</dbReference>
<dbReference type="InterPro" id="IPR050063">
    <property type="entry name" value="Ribosomal_protein_uL29"/>
</dbReference>
<dbReference type="InterPro" id="IPR001854">
    <property type="entry name" value="Ribosomal_uL29"/>
</dbReference>
<dbReference type="InterPro" id="IPR018254">
    <property type="entry name" value="Ribosomal_uL29_CS"/>
</dbReference>
<dbReference type="InterPro" id="IPR036049">
    <property type="entry name" value="Ribosomal_uL29_sf"/>
</dbReference>
<dbReference type="NCBIfam" id="TIGR00012">
    <property type="entry name" value="L29"/>
    <property type="match status" value="1"/>
</dbReference>
<dbReference type="PANTHER" id="PTHR10916">
    <property type="entry name" value="60S RIBOSOMAL PROTEIN L35/50S RIBOSOMAL PROTEIN L29"/>
    <property type="match status" value="1"/>
</dbReference>
<dbReference type="PANTHER" id="PTHR10916:SF0">
    <property type="entry name" value="LARGE RIBOSOMAL SUBUNIT PROTEIN UL29C"/>
    <property type="match status" value="1"/>
</dbReference>
<dbReference type="Pfam" id="PF00831">
    <property type="entry name" value="Ribosomal_L29"/>
    <property type="match status" value="1"/>
</dbReference>
<dbReference type="SUPFAM" id="SSF46561">
    <property type="entry name" value="Ribosomal protein L29 (L29p)"/>
    <property type="match status" value="1"/>
</dbReference>
<dbReference type="PROSITE" id="PS00579">
    <property type="entry name" value="RIBOSOMAL_L29"/>
    <property type="match status" value="1"/>
</dbReference>